<gene>
    <name evidence="10" type="primary">IFI27L2</name>
    <name evidence="10" type="synonym">FAM14A</name>
    <name evidence="9" type="synonym">TLH29</name>
</gene>
<proteinExistence type="evidence at protein level"/>
<dbReference type="EMBL" id="AF208232">
    <property type="protein sequence ID" value="AAG35730.1"/>
    <property type="molecule type" value="mRNA"/>
</dbReference>
<dbReference type="EMBL" id="BC022800">
    <property type="protein sequence ID" value="AAH22800.2"/>
    <property type="molecule type" value="mRNA"/>
</dbReference>
<dbReference type="EMBL" id="BC032626">
    <property type="protein sequence ID" value="AAH32626.1"/>
    <property type="molecule type" value="mRNA"/>
</dbReference>
<dbReference type="EMBL" id="AF238978">
    <property type="protein sequence ID" value="AAF65760.1"/>
    <property type="status" value="ALT_FRAME"/>
    <property type="molecule type" value="mRNA"/>
</dbReference>
<dbReference type="EMBL" id="BN000226">
    <property type="protein sequence ID" value="CAE00393.1"/>
    <property type="molecule type" value="mRNA"/>
</dbReference>
<dbReference type="CCDS" id="CCDS9920.1"/>
<dbReference type="RefSeq" id="NP_114425.1">
    <property type="nucleotide sequence ID" value="NM_032036.3"/>
</dbReference>
<dbReference type="FunCoup" id="Q9H2X8">
    <property type="interactions" value="55"/>
</dbReference>
<dbReference type="IntAct" id="Q9H2X8">
    <property type="interactions" value="5"/>
</dbReference>
<dbReference type="STRING" id="9606.ENSP00000238609"/>
<dbReference type="BioMuta" id="IFI27L2"/>
<dbReference type="DMDM" id="27805468"/>
<dbReference type="jPOST" id="Q9H2X8"/>
<dbReference type="MassIVE" id="Q9H2X8"/>
<dbReference type="PaxDb" id="9606-ENSP00000238609"/>
<dbReference type="PeptideAtlas" id="Q9H2X8"/>
<dbReference type="ProteomicsDB" id="80631"/>
<dbReference type="TopDownProteomics" id="Q9H2X8"/>
<dbReference type="Antibodypedia" id="27013">
    <property type="antibodies" value="68 antibodies from 15 providers"/>
</dbReference>
<dbReference type="DNASU" id="83982"/>
<dbReference type="Ensembl" id="ENST00000238609.4">
    <property type="protein sequence ID" value="ENSP00000238609.3"/>
    <property type="gene ID" value="ENSG00000119632.4"/>
</dbReference>
<dbReference type="Ensembl" id="ENST00000619362.2">
    <property type="protein sequence ID" value="ENSP00000482521.1"/>
    <property type="gene ID" value="ENSG00000276879.2"/>
</dbReference>
<dbReference type="GeneID" id="83982"/>
<dbReference type="KEGG" id="hsa:83982"/>
<dbReference type="MANE-Select" id="ENST00000238609.4">
    <property type="protein sequence ID" value="ENSP00000238609.3"/>
    <property type="RefSeq nucleotide sequence ID" value="NM_032036.3"/>
    <property type="RefSeq protein sequence ID" value="NP_114425.1"/>
</dbReference>
<dbReference type="UCSC" id="uc001ycq.4">
    <property type="organism name" value="human"/>
</dbReference>
<dbReference type="AGR" id="HGNC:19753"/>
<dbReference type="CTD" id="83982"/>
<dbReference type="GeneCards" id="IFI27L2"/>
<dbReference type="HGNC" id="HGNC:19753">
    <property type="gene designation" value="IFI27L2"/>
</dbReference>
<dbReference type="HPA" id="ENSG00000119632">
    <property type="expression patterns" value="Low tissue specificity"/>
</dbReference>
<dbReference type="MIM" id="611319">
    <property type="type" value="gene"/>
</dbReference>
<dbReference type="neXtProt" id="NX_Q9H2X8"/>
<dbReference type="OpenTargets" id="ENSG00000119632"/>
<dbReference type="PharmGKB" id="PA164720861"/>
<dbReference type="VEuPathDB" id="HostDB:ENSG00000119632"/>
<dbReference type="eggNOG" id="ENOG502S85T">
    <property type="taxonomic scope" value="Eukaryota"/>
</dbReference>
<dbReference type="GeneTree" id="ENSGT00940000155018"/>
<dbReference type="InParanoid" id="Q9H2X8"/>
<dbReference type="OMA" id="VGWLSNI"/>
<dbReference type="OrthoDB" id="440424at2759"/>
<dbReference type="PAN-GO" id="Q9H2X8">
    <property type="GO annotations" value="2 GO annotations based on evolutionary models"/>
</dbReference>
<dbReference type="PhylomeDB" id="Q9H2X8"/>
<dbReference type="TreeFam" id="TF340510"/>
<dbReference type="PathwayCommons" id="Q9H2X8"/>
<dbReference type="SignaLink" id="Q9H2X8"/>
<dbReference type="BioGRID-ORCS" id="83982">
    <property type="hits" value="13 hits in 1152 CRISPR screens"/>
</dbReference>
<dbReference type="ChiTaRS" id="IFI27L2">
    <property type="organism name" value="human"/>
</dbReference>
<dbReference type="GenomeRNAi" id="83982"/>
<dbReference type="Pharos" id="Q9H2X8">
    <property type="development level" value="Tdark"/>
</dbReference>
<dbReference type="PRO" id="PR:Q9H2X8"/>
<dbReference type="Proteomes" id="UP000005640">
    <property type="component" value="Chromosome 14"/>
</dbReference>
<dbReference type="RNAct" id="Q9H2X8">
    <property type="molecule type" value="protein"/>
</dbReference>
<dbReference type="Bgee" id="ENSG00000119632">
    <property type="expression patterns" value="Expressed in C1 segment of cervical spinal cord and 98 other cell types or tissues"/>
</dbReference>
<dbReference type="ExpressionAtlas" id="Q9H2X8">
    <property type="expression patterns" value="baseline and differential"/>
</dbReference>
<dbReference type="GO" id="GO:0031966">
    <property type="term" value="C:mitochondrial membrane"/>
    <property type="evidence" value="ECO:0000314"/>
    <property type="project" value="UniProtKB"/>
</dbReference>
<dbReference type="GO" id="GO:0005739">
    <property type="term" value="C:mitochondrion"/>
    <property type="evidence" value="ECO:0006056"/>
    <property type="project" value="FlyBase"/>
</dbReference>
<dbReference type="GO" id="GO:0060090">
    <property type="term" value="F:molecular adaptor activity"/>
    <property type="evidence" value="ECO:0000318"/>
    <property type="project" value="GO_Central"/>
</dbReference>
<dbReference type="GO" id="GO:0006915">
    <property type="term" value="P:apoptotic process"/>
    <property type="evidence" value="ECO:0000315"/>
    <property type="project" value="UniProtKB"/>
</dbReference>
<dbReference type="GO" id="GO:0097193">
    <property type="term" value="P:intrinsic apoptotic signaling pathway"/>
    <property type="evidence" value="ECO:0000318"/>
    <property type="project" value="GO_Central"/>
</dbReference>
<dbReference type="Gene3D" id="6.10.110.10">
    <property type="match status" value="1"/>
</dbReference>
<dbReference type="InterPro" id="IPR009311">
    <property type="entry name" value="IFI6/IFI27-like"/>
</dbReference>
<dbReference type="InterPro" id="IPR038213">
    <property type="entry name" value="IFI6/IFI27-like_sf"/>
</dbReference>
<dbReference type="PANTHER" id="PTHR16932">
    <property type="entry name" value="INTERFERON ALPHA-INDUCIBLE PROTEIN 27"/>
    <property type="match status" value="1"/>
</dbReference>
<dbReference type="PANTHER" id="PTHR16932:SF35">
    <property type="entry name" value="INTERFERON ALPHA-INDUCIBLE PROTEIN 27-LIKE PROTEIN 2"/>
    <property type="match status" value="1"/>
</dbReference>
<dbReference type="Pfam" id="PF06140">
    <property type="entry name" value="Ifi-6-16"/>
    <property type="match status" value="1"/>
</dbReference>
<keyword id="KW-0053">Apoptosis</keyword>
<keyword id="KW-0472">Membrane</keyword>
<keyword id="KW-0496">Mitochondrion</keyword>
<keyword id="KW-1267">Proteomics identification</keyword>
<keyword id="KW-1185">Reference proteome</keyword>
<keyword id="KW-0812">Transmembrane</keyword>
<keyword id="KW-1133">Transmembrane helix</keyword>
<sequence length="130" mass="12410">MMKRAAAAAVGGALAVGAVPVVLSAMGFTGAGIAASSIAAKMMSAAAIANGGGVSAGSLVATLQSVGAAGLSTSSNILLASVGSVLGACLGNSPSSSLPAEPEAKEDEARENVPQGEPPKPPLKSEKHEE</sequence>
<accession>Q9H2X8</accession>
<accession>Q8TBD7</accession>
<accession>Q9NYL0</accession>
<reference key="1">
    <citation type="submission" date="1999-11" db="EMBL/GenBank/DDBJ databases">
        <authorList>
            <person name="Yu S."/>
            <person name="Chen W."/>
        </authorList>
    </citation>
    <scope>NUCLEOTIDE SEQUENCE [MRNA]</scope>
    <source>
        <tissue>Hepatoma</tissue>
    </source>
</reference>
<reference key="2">
    <citation type="journal article" date="2004" name="Genome Res.">
        <title>The status, quality, and expansion of the NIH full-length cDNA project: the Mammalian Gene Collection (MGC).</title>
        <authorList>
            <consortium name="The MGC Project Team"/>
        </authorList>
    </citation>
    <scope>NUCLEOTIDE SEQUENCE [LARGE SCALE MRNA]</scope>
    <source>
        <tissue>Pancreas</tissue>
        <tissue>Uterus</tissue>
    </source>
</reference>
<reference key="3">
    <citation type="submission" date="2000-02" db="EMBL/GenBank/DDBJ databases">
        <title>Identification of a novel homologue of interferon inducible p27.</title>
        <authorList>
            <person name="Johnsen S.A."/>
            <person name="Subramaniam M."/>
            <person name="Spelsberg T.C."/>
        </authorList>
    </citation>
    <scope>NUCLEOTIDE SEQUENCE [MRNA] OF 38-130</scope>
</reference>
<reference key="4">
    <citation type="journal article" date="2004" name="BMC Genomics">
        <title>Identification of a novel gene family that includes the interferon-inducible human genes 6-16 and ISG12.</title>
        <authorList>
            <person name="Parker N."/>
            <person name="Porter A.C.G."/>
        </authorList>
    </citation>
    <scope>IDENTIFICATION</scope>
    <scope>INDUCTION BY INTERFERON</scope>
</reference>
<reference key="5">
    <citation type="journal article" date="2017" name="Biol. Cell">
        <title>Apoptotic properties of the type 1 interferon induced family of human mitochondrial membrane ISG12 proteins.</title>
        <authorList>
            <person name="Gytz H."/>
            <person name="Hansen M.F."/>
            <person name="Skovbjerg S."/>
            <person name="Kristensen A.C."/>
            <person name="Hoerlyck S."/>
            <person name="Jensen M.B."/>
            <person name="Fredborg M."/>
            <person name="Markert L.D."/>
            <person name="McMillan N.A."/>
            <person name="Christensen E.I."/>
            <person name="Martensen P.M."/>
        </authorList>
    </citation>
    <scope>FUNCTION</scope>
    <scope>SUBCELLULAR LOCATION</scope>
</reference>
<reference key="6">
    <citation type="journal article" date="2017" name="Virus Res.">
        <title>ISG12a inhibits HCV replication and potentiates the anti-HCV activity of IFN-alpha through activation of the Jak/STAT signaling pathway independent of autophagy and apoptosis.</title>
        <authorList>
            <person name="Chen Y."/>
            <person name="Jiao B."/>
            <person name="Yao M."/>
            <person name="Shi X."/>
            <person name="Zheng Z."/>
            <person name="Li S."/>
            <person name="Chen L."/>
        </authorList>
    </citation>
    <scope>INDUCTION BY INTERFERON</scope>
</reference>
<comment type="function">
    <text evidence="4">Plays a role in the apoptotic process and has a pro-apoptotic activity.</text>
</comment>
<comment type="subcellular location">
    <subcellularLocation>
        <location evidence="4">Mitochondrion membrane</location>
        <topology evidence="1">Multi-pass membrane protein</topology>
    </subcellularLocation>
</comment>
<comment type="induction">
    <text evidence="3 5">Not up-regulated by type-I interferon.</text>
</comment>
<comment type="similarity">
    <text evidence="8">Belongs to the IFI6/IFI27 family.</text>
</comment>
<comment type="sequence caution" evidence="8">
    <conflict type="frameshift">
        <sequence resource="EMBL-CDS" id="AAF65760"/>
    </conflict>
</comment>
<protein>
    <recommendedName>
        <fullName evidence="8">Interferon alpha-inducible protein 27-like protein 2</fullName>
    </recommendedName>
    <alternativeName>
        <fullName evidence="6">Interferon-stimulated gene 12b protein</fullName>
        <shortName evidence="6">ISG12(b)</shortName>
        <shortName evidence="7">ISG12B</shortName>
    </alternativeName>
    <alternativeName>
        <fullName evidence="9">Protein TLH29</fullName>
    </alternativeName>
    <alternativeName>
        <fullName>pIFI27-like protein</fullName>
    </alternativeName>
</protein>
<evidence type="ECO:0000255" key="1"/>
<evidence type="ECO:0000256" key="2">
    <source>
        <dbReference type="SAM" id="MobiDB-lite"/>
    </source>
</evidence>
<evidence type="ECO:0000269" key="3">
    <source>
    </source>
</evidence>
<evidence type="ECO:0000269" key="4">
    <source>
    </source>
</evidence>
<evidence type="ECO:0000269" key="5">
    <source>
    </source>
</evidence>
<evidence type="ECO:0000303" key="6">
    <source>
    </source>
</evidence>
<evidence type="ECO:0000303" key="7">
    <source>
    </source>
</evidence>
<evidence type="ECO:0000305" key="8"/>
<evidence type="ECO:0000312" key="9">
    <source>
        <dbReference type="EMBL" id="AAG35730.1"/>
    </source>
</evidence>
<evidence type="ECO:0000312" key="10">
    <source>
        <dbReference type="HGNC" id="HGNC:19753"/>
    </source>
</evidence>
<organism>
    <name type="scientific">Homo sapiens</name>
    <name type="common">Human</name>
    <dbReference type="NCBI Taxonomy" id="9606"/>
    <lineage>
        <taxon>Eukaryota</taxon>
        <taxon>Metazoa</taxon>
        <taxon>Chordata</taxon>
        <taxon>Craniata</taxon>
        <taxon>Vertebrata</taxon>
        <taxon>Euteleostomi</taxon>
        <taxon>Mammalia</taxon>
        <taxon>Eutheria</taxon>
        <taxon>Euarchontoglires</taxon>
        <taxon>Primates</taxon>
        <taxon>Haplorrhini</taxon>
        <taxon>Catarrhini</taxon>
        <taxon>Hominidae</taxon>
        <taxon>Homo</taxon>
    </lineage>
</organism>
<name>I27L2_HUMAN</name>
<feature type="chain" id="PRO_0000008740" description="Interferon alpha-inducible protein 27-like protein 2">
    <location>
        <begin position="1"/>
        <end position="130"/>
    </location>
</feature>
<feature type="transmembrane region" description="Helical" evidence="1">
    <location>
        <begin position="8"/>
        <end position="28"/>
    </location>
</feature>
<feature type="transmembrane region" description="Helical" evidence="1">
    <location>
        <begin position="43"/>
        <end position="63"/>
    </location>
</feature>
<feature type="transmembrane region" description="Helical" evidence="1">
    <location>
        <begin position="66"/>
        <end position="86"/>
    </location>
</feature>
<feature type="region of interest" description="Disordered" evidence="2">
    <location>
        <begin position="93"/>
        <end position="130"/>
    </location>
</feature>